<protein>
    <recommendedName>
        <fullName evidence="1">ATP-dependent helicase/deoxyribonuclease subunit B</fullName>
        <ecNumber evidence="1">3.1.-.-</ecNumber>
    </recommendedName>
    <alternativeName>
        <fullName evidence="1">ATP-dependent helicase/nuclease subunit AddB</fullName>
    </alternativeName>
</protein>
<evidence type="ECO:0000255" key="1">
    <source>
        <dbReference type="HAMAP-Rule" id="MF_01452"/>
    </source>
</evidence>
<organism>
    <name type="scientific">Thermoanaerobacter sp. (strain X514)</name>
    <dbReference type="NCBI Taxonomy" id="399726"/>
    <lineage>
        <taxon>Bacteria</taxon>
        <taxon>Bacillati</taxon>
        <taxon>Bacillota</taxon>
        <taxon>Clostridia</taxon>
        <taxon>Thermoanaerobacterales</taxon>
        <taxon>Thermoanaerobacteraceae</taxon>
        <taxon>Thermoanaerobacter</taxon>
    </lineage>
</organism>
<sequence length="1149" mass="134381">MGIRFIYGRAGTGKTYFCLREIKEKINDGNSHPLILLVPEQFTFEAEKYLLETVEKDRKMRAQVLSFKTLANRVFTEVGGLTRQHVNSCGRSMVIYKIMEDLKENLKVYYKASRQQGFIKKISEVITEFKRFEVTPEKLMDTAESIQKEGLREKLRELSLIYGKFDELLHQKYIDEEDALTLLAEKLEYSEQFKGAEFWIDGFTGFTPKQYKVLEKLLKKAARVSVTLTMDTSKDSIDNTDLFYTTKKTEDKLLKICYENNISYEKPVDLNEGVPKRFEKNEEMAFLEKHLFSYPYKIYSKDTKNISLFKAVNVYSEVEETAREIIRLVRDENLRYSDIVVTARDLKRYHKLIKTIFSHYGIPHFIDLKLDIKNNPIIVYITSLFEIYLKNWSYESVFRHLKTGFTNLNKEDISFLENYVLANGIKGGKWKEEWKYSFRNRLDKLFDDQDEKEALEKVNTIKNGISEPLNKFYKDFSNANTVREACEILYNFLVERDIPQRIENLIREFKENKEFEIANQYSQIWDIVVDVLDQMVEVMGEEKINIDLFSKILDIGFEAYQIGSIPPALDEVLVTSVDRMKSHNAKALFVIGANDGIFPASSFEEGILTDEDRQILTSYEVELDRDTKAKVFEEQFLVYTALTSTSKFLRISYPIADHEGRSLRPSIIISRFKRIFPQITQFSNVIEMDTDEENLHRVSSPDPTFNEMIKSFKEWDIKDKINSLWLDVYNWYSNKEVWRKRIEKVLEGFNYSNQVRVIPSAKIKRLYKDEINFSVSRLEKYAACPFAYFVQYGLKAKERKIYSFDPPDLGIFMHNVLNEVSKALEKEDKTWEDLDREYCDEVVNIVVDNMLKGVSEHILKSSPRYEYLSKRLTRVLSNAVWVISEHIKRSSFIPSGHEVAFGENQMYPPIKIILSNGEEINLIGRIDRVDVFEKGEESYIRIIDYKSGNKELKLEDVFYGLELQLLIYLDAILESADKENTDIKPAGIFYFRIDDPIVKADKDITDEELQKEILKKLRLDGLVLKDAEIIKEMDKSINGTSYIIPASINKDGTIGKKTKGATKEQFELLRKHVKNMIKDLAEQMINGNISITPYRKGKETACKYCPYSSVCKFETNFEGNKYMFIKEQKEEEIWNMLQKEVNKDGDKVD</sequence>
<reference key="1">
    <citation type="submission" date="2008-01" db="EMBL/GenBank/DDBJ databases">
        <title>Complete sequence of Thermoanaerobacter sp. X514.</title>
        <authorList>
            <consortium name="US DOE Joint Genome Institute"/>
            <person name="Copeland A."/>
            <person name="Lucas S."/>
            <person name="Lapidus A."/>
            <person name="Barry K."/>
            <person name="Glavina del Rio T."/>
            <person name="Dalin E."/>
            <person name="Tice H."/>
            <person name="Pitluck S."/>
            <person name="Bruce D."/>
            <person name="Goodwin L."/>
            <person name="Saunders E."/>
            <person name="Brettin T."/>
            <person name="Detter J.C."/>
            <person name="Han C."/>
            <person name="Schmutz J."/>
            <person name="Larimer F."/>
            <person name="Land M."/>
            <person name="Hauser L."/>
            <person name="Kyrpides N."/>
            <person name="Kim E."/>
            <person name="Hemme C."/>
            <person name="Fields M.W."/>
            <person name="He Z."/>
            <person name="Zhou J."/>
            <person name="Richardson P."/>
        </authorList>
    </citation>
    <scope>NUCLEOTIDE SEQUENCE [LARGE SCALE GENOMIC DNA]</scope>
    <source>
        <strain>X514</strain>
    </source>
</reference>
<gene>
    <name evidence="1" type="primary">addB</name>
    <name type="ordered locus">Teth514_0202</name>
</gene>
<keyword id="KW-0004">4Fe-4S</keyword>
<keyword id="KW-0067">ATP-binding</keyword>
<keyword id="KW-0227">DNA damage</keyword>
<keyword id="KW-0234">DNA repair</keyword>
<keyword id="KW-0238">DNA-binding</keyword>
<keyword id="KW-0269">Exonuclease</keyword>
<keyword id="KW-0347">Helicase</keyword>
<keyword id="KW-0378">Hydrolase</keyword>
<keyword id="KW-0408">Iron</keyword>
<keyword id="KW-0411">Iron-sulfur</keyword>
<keyword id="KW-0479">Metal-binding</keyword>
<keyword id="KW-0540">Nuclease</keyword>
<keyword id="KW-0547">Nucleotide-binding</keyword>
<proteinExistence type="inferred from homology"/>
<name>ADDB_THEPX</name>
<dbReference type="EC" id="3.1.-.-" evidence="1"/>
<dbReference type="EMBL" id="CP000923">
    <property type="protein sequence ID" value="ABY91520.1"/>
    <property type="molecule type" value="Genomic_DNA"/>
</dbReference>
<dbReference type="RefSeq" id="WP_009051917.1">
    <property type="nucleotide sequence ID" value="NC_010320.1"/>
</dbReference>
<dbReference type="SMR" id="B0K212"/>
<dbReference type="KEGG" id="tex:Teth514_0202"/>
<dbReference type="HOGENOM" id="CLU_007838_0_0_9"/>
<dbReference type="Proteomes" id="UP000002155">
    <property type="component" value="Chromosome"/>
</dbReference>
<dbReference type="GO" id="GO:0051539">
    <property type="term" value="F:4 iron, 4 sulfur cluster binding"/>
    <property type="evidence" value="ECO:0007669"/>
    <property type="project" value="UniProtKB-KW"/>
</dbReference>
<dbReference type="GO" id="GO:0008409">
    <property type="term" value="F:5'-3' exonuclease activity"/>
    <property type="evidence" value="ECO:0007669"/>
    <property type="project" value="UniProtKB-UniRule"/>
</dbReference>
<dbReference type="GO" id="GO:0005524">
    <property type="term" value="F:ATP binding"/>
    <property type="evidence" value="ECO:0007669"/>
    <property type="project" value="UniProtKB-UniRule"/>
</dbReference>
<dbReference type="GO" id="GO:0003690">
    <property type="term" value="F:double-stranded DNA binding"/>
    <property type="evidence" value="ECO:0007669"/>
    <property type="project" value="UniProtKB-UniRule"/>
</dbReference>
<dbReference type="GO" id="GO:0004386">
    <property type="term" value="F:helicase activity"/>
    <property type="evidence" value="ECO:0007669"/>
    <property type="project" value="UniProtKB-KW"/>
</dbReference>
<dbReference type="GO" id="GO:0046872">
    <property type="term" value="F:metal ion binding"/>
    <property type="evidence" value="ECO:0007669"/>
    <property type="project" value="UniProtKB-KW"/>
</dbReference>
<dbReference type="GO" id="GO:0000724">
    <property type="term" value="P:double-strand break repair via homologous recombination"/>
    <property type="evidence" value="ECO:0007669"/>
    <property type="project" value="UniProtKB-UniRule"/>
</dbReference>
<dbReference type="Gene3D" id="3.90.320.10">
    <property type="match status" value="1"/>
</dbReference>
<dbReference type="Gene3D" id="6.10.140.1030">
    <property type="match status" value="1"/>
</dbReference>
<dbReference type="Gene3D" id="3.40.50.300">
    <property type="entry name" value="P-loop containing nucleotide triphosphate hydrolases"/>
    <property type="match status" value="3"/>
</dbReference>
<dbReference type="HAMAP" id="MF_01452">
    <property type="entry name" value="AddB_type1"/>
    <property type="match status" value="1"/>
</dbReference>
<dbReference type="InterPro" id="IPR049035">
    <property type="entry name" value="ADDB_N"/>
</dbReference>
<dbReference type="InterPro" id="IPR014140">
    <property type="entry name" value="DNA_helicase_suAddB"/>
</dbReference>
<dbReference type="InterPro" id="IPR027417">
    <property type="entry name" value="P-loop_NTPase"/>
</dbReference>
<dbReference type="InterPro" id="IPR011604">
    <property type="entry name" value="PDDEXK-like_dom_sf"/>
</dbReference>
<dbReference type="InterPro" id="IPR038726">
    <property type="entry name" value="PDDEXK_AddAB-type"/>
</dbReference>
<dbReference type="NCBIfam" id="TIGR02773">
    <property type="entry name" value="addB_Gpos"/>
    <property type="match status" value="1"/>
</dbReference>
<dbReference type="PANTHER" id="PTHR30591">
    <property type="entry name" value="RECBCD ENZYME SUBUNIT RECC"/>
    <property type="match status" value="1"/>
</dbReference>
<dbReference type="PANTHER" id="PTHR30591:SF1">
    <property type="entry name" value="RECBCD ENZYME SUBUNIT RECC"/>
    <property type="match status" value="1"/>
</dbReference>
<dbReference type="Pfam" id="PF21445">
    <property type="entry name" value="ADDB_N"/>
    <property type="match status" value="1"/>
</dbReference>
<dbReference type="Pfam" id="PF12705">
    <property type="entry name" value="PDDEXK_1"/>
    <property type="match status" value="1"/>
</dbReference>
<dbReference type="SUPFAM" id="SSF52540">
    <property type="entry name" value="P-loop containing nucleoside triphosphate hydrolases"/>
    <property type="match status" value="1"/>
</dbReference>
<comment type="function">
    <text evidence="1">The heterodimer acts as both an ATP-dependent DNA helicase and an ATP-dependent, dual-direction single-stranded exonuclease. Recognizes the chi site generating a DNA molecule suitable for the initiation of homologous recombination. The AddB subunit has 5' -&gt; 3' nuclease activity but not helicase activity.</text>
</comment>
<comment type="cofactor">
    <cofactor evidence="1">
        <name>Mg(2+)</name>
        <dbReference type="ChEBI" id="CHEBI:18420"/>
    </cofactor>
</comment>
<comment type="cofactor">
    <cofactor evidence="1">
        <name>[4Fe-4S] cluster</name>
        <dbReference type="ChEBI" id="CHEBI:49883"/>
    </cofactor>
    <text evidence="1">Binds 1 [4Fe-4S] cluster.</text>
</comment>
<comment type="subunit">
    <text evidence="1">Heterodimer of AddA and AddB.</text>
</comment>
<comment type="miscellaneous">
    <text evidence="1">Despite having conserved helicase domains, this subunit does not have helicase activity.</text>
</comment>
<comment type="similarity">
    <text evidence="1">Belongs to the helicase family. AddB/RexB type 1 subfamily.</text>
</comment>
<accession>B0K212</accession>
<feature type="chain" id="PRO_0000379225" description="ATP-dependent helicase/deoxyribonuclease subunit B">
    <location>
        <begin position="1"/>
        <end position="1149"/>
    </location>
</feature>
<feature type="binding site" evidence="1">
    <location>
        <begin position="8"/>
        <end position="15"/>
    </location>
    <ligand>
        <name>ATP</name>
        <dbReference type="ChEBI" id="CHEBI:30616"/>
    </ligand>
</feature>
<feature type="binding site" evidence="1">
    <location>
        <position position="784"/>
    </location>
    <ligand>
        <name>[4Fe-4S] cluster</name>
        <dbReference type="ChEBI" id="CHEBI:49883"/>
    </ligand>
</feature>
<feature type="binding site" evidence="1">
    <location>
        <position position="1102"/>
    </location>
    <ligand>
        <name>[4Fe-4S] cluster</name>
        <dbReference type="ChEBI" id="CHEBI:49883"/>
    </ligand>
</feature>
<feature type="binding site" evidence="1">
    <location>
        <position position="1105"/>
    </location>
    <ligand>
        <name>[4Fe-4S] cluster</name>
        <dbReference type="ChEBI" id="CHEBI:49883"/>
    </ligand>
</feature>
<feature type="binding site" evidence="1">
    <location>
        <position position="1111"/>
    </location>
    <ligand>
        <name>[4Fe-4S] cluster</name>
        <dbReference type="ChEBI" id="CHEBI:49883"/>
    </ligand>
</feature>